<proteinExistence type="evidence at transcript level"/>
<sequence>MKTLIRKFSRTAITVVLVILAFIAIFNAWVYYTESPWTRDARFSADVVAIAPDVSGLITQVNVHDNQLVKKGQILFTIDQPRYQKALEEAQADVAYYQVLAQEKRQEAGRRNRLGVQAMSREEIDQANNVLQTVLHQLAKAQATRDLAKLDLERTVIRAPADGWVTNLNVYTGEFITRGSTAVALVKQNSFYVLAYMEETKLEGVRPGYRAEITPLGSNKVLKGTVDSVAAGVTNASSTRDDKGMATIDSNLEWVRLAQRVPVRIRLDNQQENIWPAGTTATVVVTGKQDRDESQDSFFRKMAHRLREFG</sequence>
<dbReference type="EMBL" id="U18997">
    <property type="protein sequence ID" value="AAA58043.1"/>
    <property type="molecule type" value="Genomic_DNA"/>
</dbReference>
<dbReference type="EMBL" id="U00096">
    <property type="protein sequence ID" value="AAC76273.1"/>
    <property type="molecule type" value="Genomic_DNA"/>
</dbReference>
<dbReference type="EMBL" id="AP009048">
    <property type="protein sequence ID" value="BAE77284.1"/>
    <property type="molecule type" value="Genomic_DNA"/>
</dbReference>
<dbReference type="PIR" id="C65116">
    <property type="entry name" value="C65116"/>
</dbReference>
<dbReference type="RefSeq" id="NP_417708.1">
    <property type="nucleotide sequence ID" value="NC_000913.3"/>
</dbReference>
<dbReference type="RefSeq" id="WP_000854021.1">
    <property type="nucleotide sequence ID" value="NZ_STEB01000012.1"/>
</dbReference>
<dbReference type="SMR" id="P46482"/>
<dbReference type="BioGRID" id="4262447">
    <property type="interactions" value="216"/>
</dbReference>
<dbReference type="DIP" id="DIP-12289N"/>
<dbReference type="FunCoup" id="P46482">
    <property type="interactions" value="288"/>
</dbReference>
<dbReference type="IntAct" id="P46482">
    <property type="interactions" value="2"/>
</dbReference>
<dbReference type="STRING" id="511145.b3241"/>
<dbReference type="TCDB" id="8.A.1.7.1">
    <property type="family name" value="the membrane fusion protein (mfp) family"/>
</dbReference>
<dbReference type="PaxDb" id="511145-b3241"/>
<dbReference type="EnsemblBacteria" id="AAC76273">
    <property type="protein sequence ID" value="AAC76273"/>
    <property type="gene ID" value="b3241"/>
</dbReference>
<dbReference type="GeneID" id="75206091"/>
<dbReference type="GeneID" id="947748"/>
<dbReference type="KEGG" id="ecj:JW3210"/>
<dbReference type="KEGG" id="eco:b3241"/>
<dbReference type="KEGG" id="ecoc:C3026_17630"/>
<dbReference type="PATRIC" id="fig|1411691.4.peg.3487"/>
<dbReference type="EchoBASE" id="EB2674"/>
<dbReference type="eggNOG" id="COG1566">
    <property type="taxonomic scope" value="Bacteria"/>
</dbReference>
<dbReference type="HOGENOM" id="CLU_018816_15_2_6"/>
<dbReference type="InParanoid" id="P46482"/>
<dbReference type="OMA" id="MFSPWTR"/>
<dbReference type="OrthoDB" id="9811754at2"/>
<dbReference type="PhylomeDB" id="P46482"/>
<dbReference type="BioCyc" id="EcoCyc:G7686-MONOMER"/>
<dbReference type="BioCyc" id="MetaCyc:G7686-MONOMER"/>
<dbReference type="PRO" id="PR:P46482"/>
<dbReference type="Proteomes" id="UP000000625">
    <property type="component" value="Chromosome"/>
</dbReference>
<dbReference type="GO" id="GO:0005886">
    <property type="term" value="C:plasma membrane"/>
    <property type="evidence" value="ECO:0007669"/>
    <property type="project" value="UniProtKB-SubCell"/>
</dbReference>
<dbReference type="GO" id="GO:0022857">
    <property type="term" value="F:transmembrane transporter activity"/>
    <property type="evidence" value="ECO:0000318"/>
    <property type="project" value="GO_Central"/>
</dbReference>
<dbReference type="GO" id="GO:0046942">
    <property type="term" value="P:carboxylic acid transport"/>
    <property type="evidence" value="ECO:0000316"/>
    <property type="project" value="EcoliWiki"/>
</dbReference>
<dbReference type="GO" id="GO:0055085">
    <property type="term" value="P:transmembrane transport"/>
    <property type="evidence" value="ECO:0000318"/>
    <property type="project" value="GO_Central"/>
</dbReference>
<dbReference type="FunFam" id="2.40.30.170:FF:000002">
    <property type="entry name" value="p-hydroxybenzoic acid efflux pump subunit AaeA"/>
    <property type="match status" value="1"/>
</dbReference>
<dbReference type="FunFam" id="2.40.50.100:FF:000018">
    <property type="entry name" value="p-hydroxybenzoic acid efflux pump subunit AaeA"/>
    <property type="match status" value="1"/>
</dbReference>
<dbReference type="Gene3D" id="2.40.30.170">
    <property type="match status" value="1"/>
</dbReference>
<dbReference type="Gene3D" id="2.40.50.100">
    <property type="match status" value="1"/>
</dbReference>
<dbReference type="HAMAP" id="MF_01544">
    <property type="entry name" value="AaeA"/>
    <property type="match status" value="1"/>
</dbReference>
<dbReference type="InterPro" id="IPR043602">
    <property type="entry name" value="CusB-like_dom_1"/>
</dbReference>
<dbReference type="InterPro" id="IPR032317">
    <property type="entry name" value="CusB_D23"/>
</dbReference>
<dbReference type="InterPro" id="IPR050393">
    <property type="entry name" value="MFP_Efflux_Pump"/>
</dbReference>
<dbReference type="InterPro" id="IPR022871">
    <property type="entry name" value="PHBA_efflux_pump_AaeA"/>
</dbReference>
<dbReference type="InterPro" id="IPR006143">
    <property type="entry name" value="RND_pump_MFP"/>
</dbReference>
<dbReference type="NCBIfam" id="NF007850">
    <property type="entry name" value="PRK10559.1"/>
    <property type="match status" value="1"/>
</dbReference>
<dbReference type="NCBIfam" id="TIGR01730">
    <property type="entry name" value="RND_mfp"/>
    <property type="match status" value="1"/>
</dbReference>
<dbReference type="PANTHER" id="PTHR30367:SF12">
    <property type="entry name" value="P-HYDROXYBENZOIC ACID EFFLUX PUMP SUBUNIT AAEA"/>
    <property type="match status" value="1"/>
</dbReference>
<dbReference type="PANTHER" id="PTHR30367">
    <property type="entry name" value="P-HYDROXYBENZOIC ACID EFFLUX PUMP SUBUNIT AAEA-RELATED"/>
    <property type="match status" value="1"/>
</dbReference>
<dbReference type="Pfam" id="PF00529">
    <property type="entry name" value="CusB_dom_1"/>
    <property type="match status" value="1"/>
</dbReference>
<dbReference type="Pfam" id="PF16576">
    <property type="entry name" value="HlyD_D23"/>
    <property type="match status" value="1"/>
</dbReference>
<dbReference type="SUPFAM" id="SSF111369">
    <property type="entry name" value="HlyD-like secretion proteins"/>
    <property type="match status" value="1"/>
</dbReference>
<protein>
    <recommendedName>
        <fullName evidence="1">p-hydroxybenzoic acid efflux pump subunit AaeA</fullName>
        <shortName evidence="1">pHBA efflux pump protein A</shortName>
    </recommendedName>
</protein>
<comment type="function">
    <text evidence="1 2">Forms an efflux pump with AaeB.</text>
</comment>
<comment type="subcellular location">
    <subcellularLocation>
        <location evidence="1">Cell inner membrane</location>
        <topology evidence="1">Single-pass membrane protein</topology>
    </subcellularLocation>
</comment>
<comment type="induction">
    <text evidence="1 2">Positively coregulated with aaeB and aaeX by AaeR.</text>
</comment>
<comment type="similarity">
    <text evidence="1">Belongs to the membrane fusion protein (MFP) (TC 8.A.1) family.</text>
</comment>
<gene>
    <name evidence="1" type="primary">aaeA</name>
    <name type="synonym">yhcQ</name>
    <name type="ordered locus">b3241</name>
    <name type="ordered locus">JW3210</name>
</gene>
<accession>P46482</accession>
<accession>Q2M8X2</accession>
<keyword id="KW-0997">Cell inner membrane</keyword>
<keyword id="KW-1003">Cell membrane</keyword>
<keyword id="KW-0472">Membrane</keyword>
<keyword id="KW-1185">Reference proteome</keyword>
<keyword id="KW-0812">Transmembrane</keyword>
<keyword id="KW-1133">Transmembrane helix</keyword>
<keyword id="KW-0813">Transport</keyword>
<evidence type="ECO:0000255" key="1">
    <source>
        <dbReference type="HAMAP-Rule" id="MF_01544"/>
    </source>
</evidence>
<evidence type="ECO:0000269" key="2">
    <source>
    </source>
</evidence>
<name>AAEA_ECOLI</name>
<organism>
    <name type="scientific">Escherichia coli (strain K12)</name>
    <dbReference type="NCBI Taxonomy" id="83333"/>
    <lineage>
        <taxon>Bacteria</taxon>
        <taxon>Pseudomonadati</taxon>
        <taxon>Pseudomonadota</taxon>
        <taxon>Gammaproteobacteria</taxon>
        <taxon>Enterobacterales</taxon>
        <taxon>Enterobacteriaceae</taxon>
        <taxon>Escherichia</taxon>
    </lineage>
</organism>
<feature type="chain" id="PRO_0000201850" description="p-hydroxybenzoic acid efflux pump subunit AaeA">
    <location>
        <begin position="1"/>
        <end position="310"/>
    </location>
</feature>
<feature type="transmembrane region" description="Helical" evidence="1">
    <location>
        <begin position="12"/>
        <end position="32"/>
    </location>
</feature>
<reference key="1">
    <citation type="journal article" date="1997" name="Science">
        <title>The complete genome sequence of Escherichia coli K-12.</title>
        <authorList>
            <person name="Blattner F.R."/>
            <person name="Plunkett G. III"/>
            <person name="Bloch C.A."/>
            <person name="Perna N.T."/>
            <person name="Burland V."/>
            <person name="Riley M."/>
            <person name="Collado-Vides J."/>
            <person name="Glasner J.D."/>
            <person name="Rode C.K."/>
            <person name="Mayhew G.F."/>
            <person name="Gregor J."/>
            <person name="Davis N.W."/>
            <person name="Kirkpatrick H.A."/>
            <person name="Goeden M.A."/>
            <person name="Rose D.J."/>
            <person name="Mau B."/>
            <person name="Shao Y."/>
        </authorList>
    </citation>
    <scope>NUCLEOTIDE SEQUENCE [LARGE SCALE GENOMIC DNA]</scope>
    <source>
        <strain>K12 / MG1655 / ATCC 47076</strain>
    </source>
</reference>
<reference key="2">
    <citation type="journal article" date="2006" name="Mol. Syst. Biol.">
        <title>Highly accurate genome sequences of Escherichia coli K-12 strains MG1655 and W3110.</title>
        <authorList>
            <person name="Hayashi K."/>
            <person name="Morooka N."/>
            <person name="Yamamoto Y."/>
            <person name="Fujita K."/>
            <person name="Isono K."/>
            <person name="Choi S."/>
            <person name="Ohtsubo E."/>
            <person name="Baba T."/>
            <person name="Wanner B.L."/>
            <person name="Mori H."/>
            <person name="Horiuchi T."/>
        </authorList>
    </citation>
    <scope>NUCLEOTIDE SEQUENCE [LARGE SCALE GENOMIC DNA]</scope>
    <source>
        <strain>K12 / W3110 / ATCC 27325 / DSM 5911</strain>
    </source>
</reference>
<reference key="3">
    <citation type="journal article" date="2004" name="J. Bacteriol.">
        <title>Characterization of the Escherichia coli AaeAB efflux pump: a metabolic relief valve?</title>
        <authorList>
            <person name="Van Dyk T.K."/>
            <person name="Templeton L.J."/>
            <person name="Cantera K.A."/>
            <person name="Sharpe P.L."/>
            <person name="Sariaslani F.S."/>
        </authorList>
    </citation>
    <scope>INDUCTION</scope>
    <scope>FUNCTION</scope>
    <source>
        <strain>K12 / MG1655 / ATCC 47076</strain>
    </source>
</reference>